<comment type="function">
    <text evidence="1">DEAD-box RNA helicase-like protein required for pre-18S rRNA processing, specifically at sites A0, A1, and A2.</text>
</comment>
<comment type="subunit">
    <text evidence="1">Component of the ribosomal small subunit (SSU) processome composed of at least 40 protein subunits and snoRNA U3.</text>
</comment>
<comment type="subcellular location">
    <subcellularLocation>
        <location evidence="1">Nucleus</location>
        <location evidence="1">Nucleolus</location>
    </subcellularLocation>
</comment>
<comment type="similarity">
    <text evidence="3">Belongs to the UTP25 family.</text>
</comment>
<accession>Q2UPL9</accession>
<gene>
    <name type="primary">utp25</name>
    <name type="ORF">AO090005001591</name>
</gene>
<keyword id="KW-0539">Nucleus</keyword>
<keyword id="KW-1185">Reference proteome</keyword>
<keyword id="KW-0687">Ribonucleoprotein</keyword>
<keyword id="KW-0690">Ribosome biogenesis</keyword>
<keyword id="KW-0698">rRNA processing</keyword>
<reference key="1">
    <citation type="journal article" date="2005" name="Nature">
        <title>Genome sequencing and analysis of Aspergillus oryzae.</title>
        <authorList>
            <person name="Machida M."/>
            <person name="Asai K."/>
            <person name="Sano M."/>
            <person name="Tanaka T."/>
            <person name="Kumagai T."/>
            <person name="Terai G."/>
            <person name="Kusumoto K."/>
            <person name="Arima T."/>
            <person name="Akita O."/>
            <person name="Kashiwagi Y."/>
            <person name="Abe K."/>
            <person name="Gomi K."/>
            <person name="Horiuchi H."/>
            <person name="Kitamoto K."/>
            <person name="Kobayashi T."/>
            <person name="Takeuchi M."/>
            <person name="Denning D.W."/>
            <person name="Galagan J.E."/>
            <person name="Nierman W.C."/>
            <person name="Yu J."/>
            <person name="Archer D.B."/>
            <person name="Bennett J.W."/>
            <person name="Bhatnagar D."/>
            <person name="Cleveland T.E."/>
            <person name="Fedorova N.D."/>
            <person name="Gotoh O."/>
            <person name="Horikawa H."/>
            <person name="Hosoyama A."/>
            <person name="Ichinomiya M."/>
            <person name="Igarashi R."/>
            <person name="Iwashita K."/>
            <person name="Juvvadi P.R."/>
            <person name="Kato M."/>
            <person name="Kato Y."/>
            <person name="Kin T."/>
            <person name="Kokubun A."/>
            <person name="Maeda H."/>
            <person name="Maeyama N."/>
            <person name="Maruyama J."/>
            <person name="Nagasaki H."/>
            <person name="Nakajima T."/>
            <person name="Oda K."/>
            <person name="Okada K."/>
            <person name="Paulsen I."/>
            <person name="Sakamoto K."/>
            <person name="Sawano T."/>
            <person name="Takahashi M."/>
            <person name="Takase K."/>
            <person name="Terabayashi Y."/>
            <person name="Wortman J.R."/>
            <person name="Yamada O."/>
            <person name="Yamagata Y."/>
            <person name="Anazawa H."/>
            <person name="Hata Y."/>
            <person name="Koide Y."/>
            <person name="Komori T."/>
            <person name="Koyama Y."/>
            <person name="Minetoki T."/>
            <person name="Suharnan S."/>
            <person name="Tanaka A."/>
            <person name="Isono K."/>
            <person name="Kuhara S."/>
            <person name="Ogasawara N."/>
            <person name="Kikuchi H."/>
        </authorList>
    </citation>
    <scope>NUCLEOTIDE SEQUENCE [LARGE SCALE GENOMIC DNA]</scope>
    <source>
        <strain>ATCC 42149 / RIB 40</strain>
    </source>
</reference>
<protein>
    <recommendedName>
        <fullName>U3 small nucleolar RNA-associated protein 25</fullName>
        <shortName>U3 snoRNA-associated protein 25</shortName>
    </recommendedName>
    <alternativeName>
        <fullName>U three protein 25</fullName>
    </alternativeName>
</protein>
<dbReference type="EMBL" id="BA000049">
    <property type="protein sequence ID" value="BAE56496.1"/>
    <property type="molecule type" value="Genomic_DNA"/>
</dbReference>
<dbReference type="RefSeq" id="XP_001818498.1">
    <property type="nucleotide sequence ID" value="XM_001818446.1"/>
</dbReference>
<dbReference type="STRING" id="510516.Q2UPL9"/>
<dbReference type="EnsemblFungi" id="BAE56496">
    <property type="protein sequence ID" value="BAE56496"/>
    <property type="gene ID" value="AO090005001591"/>
</dbReference>
<dbReference type="GeneID" id="5990443"/>
<dbReference type="KEGG" id="aor:AO090005001591"/>
<dbReference type="VEuPathDB" id="FungiDB:AO090005001591"/>
<dbReference type="HOGENOM" id="CLU_018705_0_1_1"/>
<dbReference type="OMA" id="QDRGDTF"/>
<dbReference type="OrthoDB" id="96505at5052"/>
<dbReference type="Proteomes" id="UP000006564">
    <property type="component" value="Chromosome 1"/>
</dbReference>
<dbReference type="GO" id="GO:0005730">
    <property type="term" value="C:nucleolus"/>
    <property type="evidence" value="ECO:0007669"/>
    <property type="project" value="UniProtKB-SubCell"/>
</dbReference>
<dbReference type="GO" id="GO:0032040">
    <property type="term" value="C:small-subunit processome"/>
    <property type="evidence" value="ECO:0007669"/>
    <property type="project" value="EnsemblFungi"/>
</dbReference>
<dbReference type="GO" id="GO:0019843">
    <property type="term" value="F:rRNA binding"/>
    <property type="evidence" value="ECO:0007669"/>
    <property type="project" value="EnsemblFungi"/>
</dbReference>
<dbReference type="GO" id="GO:0034511">
    <property type="term" value="F:U3 snoRNA binding"/>
    <property type="evidence" value="ECO:0007669"/>
    <property type="project" value="EnsemblFungi"/>
</dbReference>
<dbReference type="GO" id="GO:0000462">
    <property type="term" value="P:maturation of SSU-rRNA from tricistronic rRNA transcript (SSU-rRNA, 5.8S rRNA, LSU-rRNA)"/>
    <property type="evidence" value="ECO:0007669"/>
    <property type="project" value="EnsemblFungi"/>
</dbReference>
<dbReference type="FunFam" id="3.40.50.300:FF:002356">
    <property type="entry name" value="U3 small nucleolar RNA-associated protein 25"/>
    <property type="match status" value="1"/>
</dbReference>
<dbReference type="Gene3D" id="3.40.50.300">
    <property type="entry name" value="P-loop containing nucleotide triphosphate hydrolases"/>
    <property type="match status" value="1"/>
</dbReference>
<dbReference type="InterPro" id="IPR027417">
    <property type="entry name" value="P-loop_NTPase"/>
</dbReference>
<dbReference type="InterPro" id="IPR010678">
    <property type="entry name" value="UTP25"/>
</dbReference>
<dbReference type="InterPro" id="IPR053939">
    <property type="entry name" value="UTP25_C"/>
</dbReference>
<dbReference type="InterPro" id="IPR053940">
    <property type="entry name" value="UTP25_NTPase-like"/>
</dbReference>
<dbReference type="PANTHER" id="PTHR12933">
    <property type="entry name" value="ORF PROTEIN-RELATED"/>
    <property type="match status" value="1"/>
</dbReference>
<dbReference type="PANTHER" id="PTHR12933:SF0">
    <property type="entry name" value="U3 SMALL NUCLEOLAR RNA-ASSOCIATED PROTEIN 25 HOMOLOG"/>
    <property type="match status" value="1"/>
</dbReference>
<dbReference type="Pfam" id="PF06862">
    <property type="entry name" value="Utp25_C"/>
    <property type="match status" value="1"/>
</dbReference>
<dbReference type="Pfam" id="PF22916">
    <property type="entry name" value="UTP25_NTPase-like"/>
    <property type="match status" value="1"/>
</dbReference>
<organism>
    <name type="scientific">Aspergillus oryzae (strain ATCC 42149 / RIB 40)</name>
    <name type="common">Yellow koji mold</name>
    <dbReference type="NCBI Taxonomy" id="510516"/>
    <lineage>
        <taxon>Eukaryota</taxon>
        <taxon>Fungi</taxon>
        <taxon>Dikarya</taxon>
        <taxon>Ascomycota</taxon>
        <taxon>Pezizomycotina</taxon>
        <taxon>Eurotiomycetes</taxon>
        <taxon>Eurotiomycetidae</taxon>
        <taxon>Eurotiales</taxon>
        <taxon>Aspergillaceae</taxon>
        <taxon>Aspergillus</taxon>
        <taxon>Aspergillus subgen. Circumdati</taxon>
    </lineage>
</organism>
<name>UTP25_ASPOR</name>
<proteinExistence type="inferred from homology"/>
<evidence type="ECO:0000250" key="1"/>
<evidence type="ECO:0000256" key="2">
    <source>
        <dbReference type="SAM" id="MobiDB-lite"/>
    </source>
</evidence>
<evidence type="ECO:0000305" key="3"/>
<feature type="chain" id="PRO_0000408104" description="U3 small nucleolar RNA-associated protein 25">
    <location>
        <begin position="1"/>
        <end position="724"/>
    </location>
</feature>
<feature type="region of interest" description="Disordered" evidence="2">
    <location>
        <begin position="1"/>
        <end position="167"/>
    </location>
</feature>
<feature type="compositionally biased region" description="Basic residues" evidence="2">
    <location>
        <begin position="7"/>
        <end position="24"/>
    </location>
</feature>
<feature type="compositionally biased region" description="Acidic residues" evidence="2">
    <location>
        <begin position="34"/>
        <end position="74"/>
    </location>
</feature>
<feature type="compositionally biased region" description="Acidic residues" evidence="2">
    <location>
        <begin position="123"/>
        <end position="166"/>
    </location>
</feature>
<sequence>MAPPRNRAPKGRGARARAPIKRRNGFTTSRVDEIESEEPSGGEEGQFEDNLGDEMDYDGPMDDASSDSDEDVEDDKSARPYNELLQLLNTTADSKAPARKKRKTEHKDDKRAVAQNDIVVAANEEELLEDDDLQQQEPSDEEDEDNLDEVDADGQADSDNEDDNDPFEAHFARKEDELSKQIKAVGDNKWKTVKKELSEDLRLARAAPDTGSDLSCLPALKSIANLKLKRKLKTPALERLSQISGHAQQLAPYIFDYQDVLYGARKSSSSTQLRDILAVHAVNHVLKTRDRVLKNNARVAKEQDADLDLRDQGFTRPKVLFLLPTKQACVRVVESITQLFQPEQQENKKRFMDTFSATDDKSWESKPDDFQELFGGNDDDMFRLGLKFTRKTVKFFAQFYASDMILASPLGLRTIMDQADAKKRDHDFLSSIEVVIVDQADALLMQNWDHVDYIFKHLNLQPREAHGCDFSRVRTWYLDNNARYVRQMIMLASFITPEINSVFSTHMLNVSGKIKMTPVYAGAISETPLPVSVKQTFSRFDSLSPAKDPDARFKHFTTTVLSSLVRNVTSGRGNNSGGILIVIPSYLDFVRVRNYFATSAQTMNVSFGAISEYSDTRDIMRARTHFMNGRHSVLLYTERFHHFRRYQIRGVKRVIMYGVPENPLFWGEIVGFLGMDPAAIDEAAEGGVRALFSKWDALKLERIVGTKRVGNMLREKGGDTFTFV</sequence>